<reference key="1">
    <citation type="submission" date="2007-02" db="EMBL/GenBank/DDBJ databases">
        <title>Complete sequence of Clostridium thermocellum ATCC 27405.</title>
        <authorList>
            <consortium name="US DOE Joint Genome Institute"/>
            <person name="Copeland A."/>
            <person name="Lucas S."/>
            <person name="Lapidus A."/>
            <person name="Barry K."/>
            <person name="Detter J.C."/>
            <person name="Glavina del Rio T."/>
            <person name="Hammon N."/>
            <person name="Israni S."/>
            <person name="Dalin E."/>
            <person name="Tice H."/>
            <person name="Pitluck S."/>
            <person name="Chertkov O."/>
            <person name="Brettin T."/>
            <person name="Bruce D."/>
            <person name="Han C."/>
            <person name="Tapia R."/>
            <person name="Gilna P."/>
            <person name="Schmutz J."/>
            <person name="Larimer F."/>
            <person name="Land M."/>
            <person name="Hauser L."/>
            <person name="Kyrpides N."/>
            <person name="Mikhailova N."/>
            <person name="Wu J.H.D."/>
            <person name="Newcomb M."/>
            <person name="Richardson P."/>
        </authorList>
    </citation>
    <scope>NUCLEOTIDE SEQUENCE [LARGE SCALE GENOMIC DNA]</scope>
    <source>
        <strain>ATCC 27405 / DSM 1237 / JCM 9322 / NBRC 103400 / NCIMB 10682 / NRRL B-4536 / VPI 7372</strain>
    </source>
</reference>
<protein>
    <recommendedName>
        <fullName evidence="1">3-phosphoshikimate 1-carboxyvinyltransferase</fullName>
        <ecNumber evidence="1">2.5.1.19</ecNumber>
    </recommendedName>
    <alternativeName>
        <fullName evidence="1">5-enolpyruvylshikimate-3-phosphate synthase</fullName>
        <shortName evidence="1">EPSP synthase</shortName>
        <shortName evidence="1">EPSPS</shortName>
    </alternativeName>
</protein>
<feature type="chain" id="PRO_0000325341" description="3-phosphoshikimate 1-carboxyvinyltransferase">
    <location>
        <begin position="1"/>
        <end position="423"/>
    </location>
</feature>
<feature type="active site" description="Proton acceptor" evidence="1">
    <location>
        <position position="305"/>
    </location>
</feature>
<feature type="binding site" evidence="1">
    <location>
        <position position="20"/>
    </location>
    <ligand>
        <name>3-phosphoshikimate</name>
        <dbReference type="ChEBI" id="CHEBI:145989"/>
    </ligand>
</feature>
<feature type="binding site" evidence="1">
    <location>
        <position position="20"/>
    </location>
    <ligand>
        <name>phosphoenolpyruvate</name>
        <dbReference type="ChEBI" id="CHEBI:58702"/>
    </ligand>
</feature>
<feature type="binding site" evidence="1">
    <location>
        <position position="21"/>
    </location>
    <ligand>
        <name>3-phosphoshikimate</name>
        <dbReference type="ChEBI" id="CHEBI:145989"/>
    </ligand>
</feature>
<feature type="binding site" evidence="1">
    <location>
        <position position="25"/>
    </location>
    <ligand>
        <name>3-phosphoshikimate</name>
        <dbReference type="ChEBI" id="CHEBI:145989"/>
    </ligand>
</feature>
<feature type="binding site" evidence="1">
    <location>
        <position position="91"/>
    </location>
    <ligand>
        <name>phosphoenolpyruvate</name>
        <dbReference type="ChEBI" id="CHEBI:58702"/>
    </ligand>
</feature>
<feature type="binding site" evidence="1">
    <location>
        <position position="119"/>
    </location>
    <ligand>
        <name>phosphoenolpyruvate</name>
        <dbReference type="ChEBI" id="CHEBI:58702"/>
    </ligand>
</feature>
<feature type="binding site" evidence="1">
    <location>
        <position position="163"/>
    </location>
    <ligand>
        <name>3-phosphoshikimate</name>
        <dbReference type="ChEBI" id="CHEBI:145989"/>
    </ligand>
</feature>
<feature type="binding site" evidence="1">
    <location>
        <position position="164"/>
    </location>
    <ligand>
        <name>3-phosphoshikimate</name>
        <dbReference type="ChEBI" id="CHEBI:145989"/>
    </ligand>
</feature>
<feature type="binding site" evidence="1">
    <location>
        <position position="165"/>
    </location>
    <ligand>
        <name>3-phosphoshikimate</name>
        <dbReference type="ChEBI" id="CHEBI:145989"/>
    </ligand>
</feature>
<feature type="binding site" evidence="1">
    <location>
        <position position="165"/>
    </location>
    <ligand>
        <name>phosphoenolpyruvate</name>
        <dbReference type="ChEBI" id="CHEBI:58702"/>
    </ligand>
</feature>
<feature type="binding site" evidence="1">
    <location>
        <position position="305"/>
    </location>
    <ligand>
        <name>3-phosphoshikimate</name>
        <dbReference type="ChEBI" id="CHEBI:145989"/>
    </ligand>
</feature>
<feature type="binding site" evidence="1">
    <location>
        <position position="328"/>
    </location>
    <ligand>
        <name>3-phosphoshikimate</name>
        <dbReference type="ChEBI" id="CHEBI:145989"/>
    </ligand>
</feature>
<feature type="binding site" evidence="1">
    <location>
        <position position="332"/>
    </location>
    <ligand>
        <name>3-phosphoshikimate</name>
        <dbReference type="ChEBI" id="CHEBI:145989"/>
    </ligand>
</feature>
<feature type="binding site" evidence="1">
    <location>
        <position position="336"/>
    </location>
    <ligand>
        <name>phosphoenolpyruvate</name>
        <dbReference type="ChEBI" id="CHEBI:58702"/>
    </ligand>
</feature>
<feature type="binding site" evidence="1">
    <location>
        <position position="377"/>
    </location>
    <ligand>
        <name>phosphoenolpyruvate</name>
        <dbReference type="ChEBI" id="CHEBI:58702"/>
    </ligand>
</feature>
<gene>
    <name evidence="1" type="primary">aroA</name>
    <name type="ordered locus">Cthe_3086</name>
</gene>
<name>AROA_ACET2</name>
<evidence type="ECO:0000255" key="1">
    <source>
        <dbReference type="HAMAP-Rule" id="MF_00210"/>
    </source>
</evidence>
<comment type="function">
    <text evidence="1">Catalyzes the transfer of the enolpyruvyl moiety of phosphoenolpyruvate (PEP) to the 5-hydroxyl of shikimate-3-phosphate (S3P) to produce enolpyruvyl shikimate-3-phosphate and inorganic phosphate.</text>
</comment>
<comment type="catalytic activity">
    <reaction evidence="1">
        <text>3-phosphoshikimate + phosphoenolpyruvate = 5-O-(1-carboxyvinyl)-3-phosphoshikimate + phosphate</text>
        <dbReference type="Rhea" id="RHEA:21256"/>
        <dbReference type="ChEBI" id="CHEBI:43474"/>
        <dbReference type="ChEBI" id="CHEBI:57701"/>
        <dbReference type="ChEBI" id="CHEBI:58702"/>
        <dbReference type="ChEBI" id="CHEBI:145989"/>
        <dbReference type="EC" id="2.5.1.19"/>
    </reaction>
    <physiologicalReaction direction="left-to-right" evidence="1">
        <dbReference type="Rhea" id="RHEA:21257"/>
    </physiologicalReaction>
</comment>
<comment type="pathway">
    <text evidence="1">Metabolic intermediate biosynthesis; chorismate biosynthesis; chorismate from D-erythrose 4-phosphate and phosphoenolpyruvate: step 6/7.</text>
</comment>
<comment type="subunit">
    <text evidence="1">Monomer.</text>
</comment>
<comment type="subcellular location">
    <subcellularLocation>
        <location evidence="1">Cytoplasm</location>
    </subcellularLocation>
</comment>
<comment type="similarity">
    <text evidence="1">Belongs to the EPSP synthase family.</text>
</comment>
<organism>
    <name type="scientific">Acetivibrio thermocellus (strain ATCC 27405 / DSM 1237 / JCM 9322 / NBRC 103400 / NCIMB 10682 / NRRL B-4536 / VPI 7372)</name>
    <name type="common">Clostridium thermocellum</name>
    <dbReference type="NCBI Taxonomy" id="203119"/>
    <lineage>
        <taxon>Bacteria</taxon>
        <taxon>Bacillati</taxon>
        <taxon>Bacillota</taxon>
        <taxon>Clostridia</taxon>
        <taxon>Eubacteriales</taxon>
        <taxon>Oscillospiraceae</taxon>
        <taxon>Acetivibrio</taxon>
    </lineage>
</organism>
<keyword id="KW-0028">Amino-acid biosynthesis</keyword>
<keyword id="KW-0057">Aromatic amino acid biosynthesis</keyword>
<keyword id="KW-0963">Cytoplasm</keyword>
<keyword id="KW-1185">Reference proteome</keyword>
<keyword id="KW-0808">Transferase</keyword>
<proteinExistence type="inferred from homology"/>
<sequence>MLLKVRKSKASGNVRIPGSKSHTIRALFFASLAEGKSEIQSPLISDDALSAVEVCRALGAKIEKEDDKYVVEGFGGNPEVPEDVINVGNSGTTLRFGIMTAALGDGCSVFTGDRQIRQRPLGPLLCAINNLGAEAFSTRNNGRAPVVVKGKLKGGRTEIDSVTSQYLSSILINSPLIPLDTEVIVTRLNEVPYVDMTLWWLDKLGIKYENHDYKTFYIKGGQRYRPLNVTIPGDFSSATFFAVQAAISGEEFVLDNLDMTDPQGDKMVFSILEDMGAKVKVEGKSVRIKGCELVGREIDMNAIPDALPAMAVAGCFAKGETKLLNVPQARIKETDRIHVMCEQLKKMGADITELEDGLVIRESRLKGCKLEGYGDHRVVMSLAIAGLNAEGETVIDTAEAVNVTFPDFVNFLSRCGADISTCE</sequence>
<dbReference type="EC" id="2.5.1.19" evidence="1"/>
<dbReference type="EMBL" id="CP000568">
    <property type="protein sequence ID" value="ABN54282.1"/>
    <property type="molecule type" value="Genomic_DNA"/>
</dbReference>
<dbReference type="RefSeq" id="WP_003511564.1">
    <property type="nucleotide sequence ID" value="NC_009012.1"/>
</dbReference>
<dbReference type="SMR" id="A3DK03"/>
<dbReference type="STRING" id="203119.Cthe_3086"/>
<dbReference type="GeneID" id="35804466"/>
<dbReference type="KEGG" id="cth:Cthe_3086"/>
<dbReference type="eggNOG" id="COG0128">
    <property type="taxonomic scope" value="Bacteria"/>
</dbReference>
<dbReference type="HOGENOM" id="CLU_024321_0_0_9"/>
<dbReference type="OrthoDB" id="9809920at2"/>
<dbReference type="UniPathway" id="UPA00053">
    <property type="reaction ID" value="UER00089"/>
</dbReference>
<dbReference type="Proteomes" id="UP000002145">
    <property type="component" value="Chromosome"/>
</dbReference>
<dbReference type="GO" id="GO:0005737">
    <property type="term" value="C:cytoplasm"/>
    <property type="evidence" value="ECO:0007669"/>
    <property type="project" value="UniProtKB-SubCell"/>
</dbReference>
<dbReference type="GO" id="GO:0003866">
    <property type="term" value="F:3-phosphoshikimate 1-carboxyvinyltransferase activity"/>
    <property type="evidence" value="ECO:0007669"/>
    <property type="project" value="UniProtKB-UniRule"/>
</dbReference>
<dbReference type="GO" id="GO:0008652">
    <property type="term" value="P:amino acid biosynthetic process"/>
    <property type="evidence" value="ECO:0007669"/>
    <property type="project" value="UniProtKB-KW"/>
</dbReference>
<dbReference type="GO" id="GO:0009073">
    <property type="term" value="P:aromatic amino acid family biosynthetic process"/>
    <property type="evidence" value="ECO:0007669"/>
    <property type="project" value="UniProtKB-KW"/>
</dbReference>
<dbReference type="GO" id="GO:0009423">
    <property type="term" value="P:chorismate biosynthetic process"/>
    <property type="evidence" value="ECO:0007669"/>
    <property type="project" value="UniProtKB-UniRule"/>
</dbReference>
<dbReference type="CDD" id="cd01556">
    <property type="entry name" value="EPSP_synthase"/>
    <property type="match status" value="1"/>
</dbReference>
<dbReference type="Gene3D" id="3.65.10.10">
    <property type="entry name" value="Enolpyruvate transferase domain"/>
    <property type="match status" value="2"/>
</dbReference>
<dbReference type="HAMAP" id="MF_00210">
    <property type="entry name" value="EPSP_synth"/>
    <property type="match status" value="1"/>
</dbReference>
<dbReference type="InterPro" id="IPR001986">
    <property type="entry name" value="Enolpyruvate_Tfrase_dom"/>
</dbReference>
<dbReference type="InterPro" id="IPR036968">
    <property type="entry name" value="Enolpyruvate_Tfrase_sf"/>
</dbReference>
<dbReference type="InterPro" id="IPR006264">
    <property type="entry name" value="EPSP_synthase"/>
</dbReference>
<dbReference type="InterPro" id="IPR023193">
    <property type="entry name" value="EPSP_synthase_CS"/>
</dbReference>
<dbReference type="InterPro" id="IPR013792">
    <property type="entry name" value="RNA3'P_cycl/enolpyr_Trfase_a/b"/>
</dbReference>
<dbReference type="NCBIfam" id="TIGR01356">
    <property type="entry name" value="aroA"/>
    <property type="match status" value="1"/>
</dbReference>
<dbReference type="PANTHER" id="PTHR21090">
    <property type="entry name" value="AROM/DEHYDROQUINATE SYNTHASE"/>
    <property type="match status" value="1"/>
</dbReference>
<dbReference type="PANTHER" id="PTHR21090:SF5">
    <property type="entry name" value="PENTAFUNCTIONAL AROM POLYPEPTIDE"/>
    <property type="match status" value="1"/>
</dbReference>
<dbReference type="Pfam" id="PF00275">
    <property type="entry name" value="EPSP_synthase"/>
    <property type="match status" value="1"/>
</dbReference>
<dbReference type="PIRSF" id="PIRSF000505">
    <property type="entry name" value="EPSPS"/>
    <property type="match status" value="1"/>
</dbReference>
<dbReference type="SUPFAM" id="SSF55205">
    <property type="entry name" value="EPT/RTPC-like"/>
    <property type="match status" value="1"/>
</dbReference>
<dbReference type="PROSITE" id="PS00885">
    <property type="entry name" value="EPSP_SYNTHASE_2"/>
    <property type="match status" value="1"/>
</dbReference>
<accession>A3DK03</accession>